<organism>
    <name type="scientific">Novosphingobium aromaticivorans (strain ATCC 700278 / DSM 12444 / CCUG 56034 / CIP 105152 / NBRC 16084 / F199)</name>
    <dbReference type="NCBI Taxonomy" id="279238"/>
    <lineage>
        <taxon>Bacteria</taxon>
        <taxon>Pseudomonadati</taxon>
        <taxon>Pseudomonadota</taxon>
        <taxon>Alphaproteobacteria</taxon>
        <taxon>Sphingomonadales</taxon>
        <taxon>Sphingomonadaceae</taxon>
        <taxon>Novosphingobium</taxon>
    </lineage>
</organism>
<protein>
    <recommendedName>
        <fullName evidence="1">Protoheme IX farnesyltransferase</fullName>
        <ecNumber evidence="1">2.5.1.141</ecNumber>
    </recommendedName>
    <alternativeName>
        <fullName evidence="1">Heme B farnesyltransferase</fullName>
    </alternativeName>
    <alternativeName>
        <fullName evidence="1">Heme O synthase</fullName>
    </alternativeName>
</protein>
<proteinExistence type="inferred from homology"/>
<evidence type="ECO:0000255" key="1">
    <source>
        <dbReference type="HAMAP-Rule" id="MF_00154"/>
    </source>
</evidence>
<comment type="function">
    <text evidence="1">Converts heme B (protoheme IX) to heme O by substitution of the vinyl group on carbon 2 of heme B porphyrin ring with a hydroxyethyl farnesyl side group.</text>
</comment>
<comment type="catalytic activity">
    <reaction evidence="1">
        <text>heme b + (2E,6E)-farnesyl diphosphate + H2O = Fe(II)-heme o + diphosphate</text>
        <dbReference type="Rhea" id="RHEA:28070"/>
        <dbReference type="ChEBI" id="CHEBI:15377"/>
        <dbReference type="ChEBI" id="CHEBI:33019"/>
        <dbReference type="ChEBI" id="CHEBI:60344"/>
        <dbReference type="ChEBI" id="CHEBI:60530"/>
        <dbReference type="ChEBI" id="CHEBI:175763"/>
        <dbReference type="EC" id="2.5.1.141"/>
    </reaction>
</comment>
<comment type="pathway">
    <text evidence="1">Porphyrin-containing compound metabolism; heme O biosynthesis; heme O from protoheme: step 1/1.</text>
</comment>
<comment type="subcellular location">
    <subcellularLocation>
        <location evidence="1">Cell inner membrane</location>
        <topology evidence="1">Multi-pass membrane protein</topology>
    </subcellularLocation>
</comment>
<comment type="miscellaneous">
    <text evidence="1">Carbon 2 of the heme B porphyrin ring is defined according to the Fischer nomenclature.</text>
</comment>
<comment type="similarity">
    <text evidence="1">Belongs to the UbiA prenyltransferase family. Protoheme IX farnesyltransferase subfamily.</text>
</comment>
<name>COXX_NOVAD</name>
<gene>
    <name evidence="1" type="primary">ctaB</name>
    <name type="ordered locus">Saro_0915</name>
</gene>
<feature type="chain" id="PRO_0000327104" description="Protoheme IX farnesyltransferase">
    <location>
        <begin position="1"/>
        <end position="304"/>
    </location>
</feature>
<feature type="transmembrane region" description="Helical" evidence="1">
    <location>
        <begin position="24"/>
        <end position="44"/>
    </location>
</feature>
<feature type="transmembrane region" description="Helical" evidence="1">
    <location>
        <begin position="45"/>
        <end position="65"/>
    </location>
</feature>
<feature type="transmembrane region" description="Helical" evidence="1">
    <location>
        <begin position="107"/>
        <end position="127"/>
    </location>
</feature>
<feature type="transmembrane region" description="Helical" evidence="1">
    <location>
        <begin position="145"/>
        <end position="165"/>
    </location>
</feature>
<feature type="transmembrane region" description="Helical" evidence="1">
    <location>
        <begin position="172"/>
        <end position="192"/>
    </location>
</feature>
<feature type="transmembrane region" description="Helical" evidence="1">
    <location>
        <begin position="234"/>
        <end position="254"/>
    </location>
</feature>
<feature type="transmembrane region" description="Helical" evidence="1">
    <location>
        <begin position="277"/>
        <end position="297"/>
    </location>
</feature>
<accession>Q2G9W3</accession>
<dbReference type="EC" id="2.5.1.141" evidence="1"/>
<dbReference type="EMBL" id="CP000248">
    <property type="protein sequence ID" value="ABD25360.1"/>
    <property type="molecule type" value="Genomic_DNA"/>
</dbReference>
<dbReference type="RefSeq" id="WP_011444574.1">
    <property type="nucleotide sequence ID" value="NC_007794.1"/>
</dbReference>
<dbReference type="SMR" id="Q2G9W3"/>
<dbReference type="STRING" id="279238.Saro_0915"/>
<dbReference type="KEGG" id="nar:Saro_0915"/>
<dbReference type="eggNOG" id="COG0109">
    <property type="taxonomic scope" value="Bacteria"/>
</dbReference>
<dbReference type="HOGENOM" id="CLU_029631_0_2_5"/>
<dbReference type="UniPathway" id="UPA00834">
    <property type="reaction ID" value="UER00712"/>
</dbReference>
<dbReference type="Proteomes" id="UP000009134">
    <property type="component" value="Chromosome"/>
</dbReference>
<dbReference type="GO" id="GO:0005886">
    <property type="term" value="C:plasma membrane"/>
    <property type="evidence" value="ECO:0007669"/>
    <property type="project" value="UniProtKB-SubCell"/>
</dbReference>
<dbReference type="GO" id="GO:0008495">
    <property type="term" value="F:protoheme IX farnesyltransferase activity"/>
    <property type="evidence" value="ECO:0007669"/>
    <property type="project" value="UniProtKB-UniRule"/>
</dbReference>
<dbReference type="GO" id="GO:0048034">
    <property type="term" value="P:heme O biosynthetic process"/>
    <property type="evidence" value="ECO:0007669"/>
    <property type="project" value="UniProtKB-UniRule"/>
</dbReference>
<dbReference type="CDD" id="cd13957">
    <property type="entry name" value="PT_UbiA_Cox10"/>
    <property type="match status" value="1"/>
</dbReference>
<dbReference type="Gene3D" id="1.10.357.140">
    <property type="entry name" value="UbiA prenyltransferase"/>
    <property type="match status" value="1"/>
</dbReference>
<dbReference type="HAMAP" id="MF_00154">
    <property type="entry name" value="CyoE_CtaB"/>
    <property type="match status" value="1"/>
</dbReference>
<dbReference type="InterPro" id="IPR006369">
    <property type="entry name" value="Protohaem_IX_farnesylTrfase"/>
</dbReference>
<dbReference type="InterPro" id="IPR000537">
    <property type="entry name" value="UbiA_prenyltransferase"/>
</dbReference>
<dbReference type="InterPro" id="IPR030470">
    <property type="entry name" value="UbiA_prenylTrfase_CS"/>
</dbReference>
<dbReference type="InterPro" id="IPR044878">
    <property type="entry name" value="UbiA_sf"/>
</dbReference>
<dbReference type="NCBIfam" id="TIGR01473">
    <property type="entry name" value="cyoE_ctaB"/>
    <property type="match status" value="1"/>
</dbReference>
<dbReference type="NCBIfam" id="NF003349">
    <property type="entry name" value="PRK04375.1-2"/>
    <property type="match status" value="1"/>
</dbReference>
<dbReference type="PANTHER" id="PTHR43448:SF7">
    <property type="entry name" value="4-HYDROXYBENZOATE SOLANESYLTRANSFERASE"/>
    <property type="match status" value="1"/>
</dbReference>
<dbReference type="PANTHER" id="PTHR43448">
    <property type="entry name" value="PROTOHEME IX FARNESYLTRANSFERASE, MITOCHONDRIAL"/>
    <property type="match status" value="1"/>
</dbReference>
<dbReference type="Pfam" id="PF01040">
    <property type="entry name" value="UbiA"/>
    <property type="match status" value="1"/>
</dbReference>
<dbReference type="PROSITE" id="PS00943">
    <property type="entry name" value="UBIA"/>
    <property type="match status" value="1"/>
</dbReference>
<reference key="1">
    <citation type="submission" date="2006-01" db="EMBL/GenBank/DDBJ databases">
        <title>Complete sequence of Novosphingobium aromaticivorans DSM 12444.</title>
        <authorList>
            <consortium name="US DOE Joint Genome Institute"/>
            <person name="Copeland A."/>
            <person name="Lucas S."/>
            <person name="Lapidus A."/>
            <person name="Barry K."/>
            <person name="Detter J.C."/>
            <person name="Glavina T."/>
            <person name="Hammon N."/>
            <person name="Israni S."/>
            <person name="Pitluck S."/>
            <person name="Chain P."/>
            <person name="Malfatti S."/>
            <person name="Shin M."/>
            <person name="Vergez L."/>
            <person name="Schmutz J."/>
            <person name="Larimer F."/>
            <person name="Land M."/>
            <person name="Kyrpides N."/>
            <person name="Ivanova N."/>
            <person name="Fredrickson J."/>
            <person name="Balkwill D."/>
            <person name="Romine M.F."/>
            <person name="Richardson P."/>
        </authorList>
    </citation>
    <scope>NUCLEOTIDE SEQUENCE [LARGE SCALE GENOMIC DNA]</scope>
    <source>
        <strain>ATCC 700278 / DSM 12444 / CCUG 56034 / CIP 105152 / NBRC 16084 / F199</strain>
    </source>
</reference>
<sequence length="304" mass="32950">MDSAKPLALPADWRDFFALTKPRVMTLVIFTGLCGLLAAPGTIHPVIAFTAILCIAVGAGGAAALNQWWEADIDAGMKRTAQRPLPAGRMDRTSARDFGFALAGGSVFVMGLGVGWLAAVILAFSIFYYSWIYTVWLKPRTPQNIVIGGGAGAFPPMIGWVAVTGDITLMPVLLFLIIFMWTPPHFWALALFVQTDYAKVGIPMMPVVAGERSTRKQILAYSILLLPLTLVPWWIGGAGAVYGWSALVLGLVFVALSVKVGLRRSVPNDGMLPEKRLFGYSVLYLFVLFGMLVGDRLATVQGWQ</sequence>
<keyword id="KW-0997">Cell inner membrane</keyword>
<keyword id="KW-1003">Cell membrane</keyword>
<keyword id="KW-0350">Heme biosynthesis</keyword>
<keyword id="KW-0472">Membrane</keyword>
<keyword id="KW-1185">Reference proteome</keyword>
<keyword id="KW-0808">Transferase</keyword>
<keyword id="KW-0812">Transmembrane</keyword>
<keyword id="KW-1133">Transmembrane helix</keyword>